<comment type="function">
    <text evidence="4">Component of the pilus tip. Can bind covalently, via its two reactive thioester bonds, to molecular targets from host cell surface and can thus mediate adhesion of the streptococcal pili to host cells. Lysine side chains or a carbohydrate with a free amine group might be candidates for Cpa binding. In vitro, can covalently bind to spermidine, but it is unlikely that spermidine is the natural target of Cpa.</text>
</comment>
<comment type="subunit">
    <text evidence="4">Monomer.</text>
</comment>
<comment type="subcellular location">
    <subcellularLocation>
        <location evidence="1">Fimbrium</location>
    </subcellularLocation>
</comment>
<comment type="PTM">
    <text evidence="5">Proteolytically processed and assembled in pili through a transpeptidation reaction catalyzed by a sortase, which leads to a covalent link between Cpa and a major pilin subunit.</text>
</comment>
<keyword id="KW-0002">3D-structure</keyword>
<keyword id="KW-0281">Fimbrium</keyword>
<keyword id="KW-1017">Isopeptide bond</keyword>
<keyword id="KW-0882">Thioester bond</keyword>
<gene>
    <name type="primary">cpa</name>
</gene>
<accession>S5FV19</accession>
<proteinExistence type="evidence at protein level"/>
<feature type="chain" id="PRO_0000425618" description="Pilus tip adhesin Cpa">
    <location>
        <begin position="1" status="less than"/>
        <end position="675"/>
    </location>
</feature>
<feature type="propeptide" id="PRO_0000425619" description="Removed by sortase" evidence="2">
    <location>
        <begin position="676"/>
        <end position="680" status="greater than"/>
    </location>
</feature>
<feature type="domain" description="CNA-B">
    <location>
        <begin position="253"/>
        <end position="311"/>
    </location>
</feature>
<feature type="region of interest" description="Disordered" evidence="3">
    <location>
        <begin position="217"/>
        <end position="236"/>
    </location>
</feature>
<feature type="short sequence motif" description="VPPTG sorting signal" evidence="2">
    <location>
        <begin position="672"/>
        <end position="676"/>
    </location>
</feature>
<feature type="compositionally biased region" description="Basic and acidic residues" evidence="3">
    <location>
        <begin position="226"/>
        <end position="236"/>
    </location>
</feature>
<feature type="cross-link" description="Isoglutamyl cysteine thioester (Cys-Gln)">
    <location>
        <begin position="62"/>
        <end position="211"/>
    </location>
</feature>
<feature type="cross-link" description="Isoaspartyl lysine isopeptide (Lys-Asp)">
    <location>
        <begin position="243"/>
        <end position="546"/>
    </location>
</feature>
<feature type="cross-link" description="Isoglutamyl cysteine thioester (Cys-Gln)" evidence="5">
    <location>
        <begin position="374"/>
        <end position="526"/>
    </location>
</feature>
<feature type="cross-link" description="Isoaspartyl lysine isopeptide (Lys-Asn)">
    <location>
        <begin position="562"/>
        <end position="667"/>
    </location>
</feature>
<feature type="cross-link" description="Threonyl lysine isopeptide (Thr-Lys) (interchain with K-? in major pilin subunit)" evidence="2">
    <location>
        <position position="675"/>
    </location>
</feature>
<feature type="non-terminal residue">
    <location>
        <position position="1"/>
    </location>
</feature>
<feature type="non-terminal residue">
    <location>
        <position position="680"/>
    </location>
</feature>
<feature type="strand" evidence="6">
    <location>
        <begin position="26"/>
        <end position="30"/>
    </location>
</feature>
<feature type="strand" evidence="6">
    <location>
        <begin position="48"/>
        <end position="52"/>
    </location>
</feature>
<feature type="strand" evidence="6">
    <location>
        <begin position="61"/>
        <end position="63"/>
    </location>
</feature>
<feature type="strand" evidence="6">
    <location>
        <begin position="79"/>
        <end position="85"/>
    </location>
</feature>
<feature type="helix" evidence="6">
    <location>
        <begin position="88"/>
        <end position="94"/>
    </location>
</feature>
<feature type="helix" evidence="6">
    <location>
        <begin position="105"/>
        <end position="115"/>
    </location>
</feature>
<feature type="turn" evidence="6">
    <location>
        <begin position="117"/>
        <end position="119"/>
    </location>
</feature>
<feature type="turn" evidence="6">
    <location>
        <begin position="124"/>
        <end position="127"/>
    </location>
</feature>
<feature type="helix" evidence="6">
    <location>
        <begin position="130"/>
        <end position="145"/>
    </location>
</feature>
<feature type="helix" evidence="6">
    <location>
        <begin position="153"/>
        <end position="155"/>
    </location>
</feature>
<feature type="helix" evidence="6">
    <location>
        <begin position="158"/>
        <end position="164"/>
    </location>
</feature>
<feature type="helix" evidence="6">
    <location>
        <begin position="168"/>
        <end position="181"/>
    </location>
</feature>
<feature type="helix" evidence="6">
    <location>
        <begin position="184"/>
        <end position="188"/>
    </location>
</feature>
<feature type="strand" evidence="6">
    <location>
        <begin position="190"/>
        <end position="192"/>
    </location>
</feature>
<feature type="strand" evidence="6">
    <location>
        <begin position="198"/>
        <end position="207"/>
    </location>
</feature>
<feature type="strand" evidence="6">
    <location>
        <begin position="212"/>
        <end position="218"/>
    </location>
</feature>
<name>CPA_STRPY</name>
<dbReference type="EMBL" id="KC622314">
    <property type="protein sequence ID" value="AGQ45688.1"/>
    <property type="molecule type" value="Genomic_DNA"/>
</dbReference>
<dbReference type="PDB" id="4C0Z">
    <property type="method" value="X-ray"/>
    <property type="resolution" value="2.00 A"/>
    <property type="chains" value="A/B/C/D/E/F/G/H/I/J/K/L=8-222"/>
</dbReference>
<dbReference type="PDBsum" id="4C0Z"/>
<dbReference type="SMR" id="S5FV19"/>
<dbReference type="EvolutionaryTrace" id="S5FV19"/>
<dbReference type="GO" id="GO:0009289">
    <property type="term" value="C:pilus"/>
    <property type="evidence" value="ECO:0007669"/>
    <property type="project" value="UniProtKB-SubCell"/>
</dbReference>
<dbReference type="Gene3D" id="1.10.150.480">
    <property type="match status" value="1"/>
</dbReference>
<dbReference type="Gene3D" id="2.60.40.1140">
    <property type="entry name" value="Collagen-binding surface protein Cna, B-type domain"/>
    <property type="match status" value="1"/>
</dbReference>
<dbReference type="Gene3D" id="2.60.40.10">
    <property type="entry name" value="Immunoglobulins"/>
    <property type="match status" value="1"/>
</dbReference>
<dbReference type="Gene3D" id="2.30.30.670">
    <property type="entry name" value="Thioester domain"/>
    <property type="match status" value="3"/>
</dbReference>
<dbReference type="InterPro" id="IPR055382">
    <property type="entry name" value="DUF7601"/>
</dbReference>
<dbReference type="InterPro" id="IPR013783">
    <property type="entry name" value="Ig-like_fold"/>
</dbReference>
<dbReference type="InterPro" id="IPR053671">
    <property type="entry name" value="Pilus_tip_adhesin"/>
</dbReference>
<dbReference type="InterPro" id="IPR041033">
    <property type="entry name" value="SpaA_PFL_dom_1"/>
</dbReference>
<dbReference type="InterPro" id="IPR013552">
    <property type="entry name" value="Thioester_dom"/>
</dbReference>
<dbReference type="InterPro" id="IPR023849">
    <property type="entry name" value="TQXA_dom"/>
</dbReference>
<dbReference type="NCBIfam" id="NF033396">
    <property type="entry name" value="pilus_ancill_1"/>
    <property type="match status" value="1"/>
</dbReference>
<dbReference type="NCBIfam" id="NF012162">
    <property type="entry name" value="surf_Nterm_1"/>
    <property type="match status" value="1"/>
</dbReference>
<dbReference type="NCBIfam" id="TIGR03934">
    <property type="entry name" value="TQXA_dom"/>
    <property type="match status" value="2"/>
</dbReference>
<dbReference type="Pfam" id="PF24547">
    <property type="entry name" value="DUF7601"/>
    <property type="match status" value="1"/>
</dbReference>
<dbReference type="Pfam" id="PF17802">
    <property type="entry name" value="SpaA"/>
    <property type="match status" value="1"/>
</dbReference>
<dbReference type="Pfam" id="PF08341">
    <property type="entry name" value="TED"/>
    <property type="match status" value="2"/>
</dbReference>
<reference key="1">
    <citation type="journal article" date="2014" name="J. Biol. Chem.">
        <title>Structural model for covalent adhesion of the Streptococcus pyogenes pilus through a thioester bond.</title>
        <authorList>
            <person name="Linke-Winnebeck C."/>
            <person name="Paterson N.G."/>
            <person name="Young P.G."/>
            <person name="Middleditch M.J."/>
            <person name="Greenwood D.R."/>
            <person name="Witte G."/>
            <person name="Baker E.N."/>
        </authorList>
    </citation>
    <scope>NUCLEOTIDE SEQUENCE [GENOMIC DNA]</scope>
    <scope>X-RAY CRYSTALLOGRAPHY (2.00 ANGSTROMS) OF 8-222 IN COMPLEX WITH SPERMIDINE VIA A COVALENT LINKAGE</scope>
    <scope>FUNCTION</scope>
    <scope>IDENTIFICATION BY MASS SPECTROMETRY</scope>
    <scope>CROSS-LINKS</scope>
    <scope>SUBUNIT</scope>
    <source>
        <strain>90/306S / Serotype M5</strain>
    </source>
</reference>
<protein>
    <recommendedName>
        <fullName>Pilus tip adhesin Cpa</fullName>
    </recommendedName>
</protein>
<evidence type="ECO:0000250" key="1"/>
<evidence type="ECO:0000255" key="2"/>
<evidence type="ECO:0000256" key="3">
    <source>
        <dbReference type="SAM" id="MobiDB-lite"/>
    </source>
</evidence>
<evidence type="ECO:0000269" key="4">
    <source>
    </source>
</evidence>
<evidence type="ECO:0000305" key="5"/>
<evidence type="ECO:0007829" key="6">
    <source>
        <dbReference type="PDB" id="4C0Z"/>
    </source>
</evidence>
<sequence length="680" mass="76382">GFSIRAFGAEEQSVPNKQSSVQDYPWYGYDSYSKGYPDYSPLKTYHNLKVNLDGSKEYQAYCFNLTKHFPSKSDSVRSQWYKKLEGTNENFIKLADKPRIEDGQLQQNILRILYNGYPNDRNGIMKGIDPLNAILVTQNAIWYYTDSSYISDTSKAFQQEETDLKLDSQQLQLMRNALKRLINPKEVESLPNQVPANYQLSIFQSSDKTFQNLLSAEYVPDTPPKPGEEPPAKTEKTSVIIRKYAEGDYSKLLEGATLKLAQIEGSGFQEKIFDSNKSGEKVELPNGTYVLSELKPPQGYGVATPITFKVAAEKVLIKNKEGQFVENQNKEIAEPYSVTAFNDFEEIGYLSDFNNYGKFYYAKNTNGTNQVVYCFNADLHSPPDSYDHGANIDPDVSESKEIKYTHVSGYDLYKYAVTPRDKDADLFLKHIKKILDKGYKKKGDTYKTLTEAQFRAATQLAIYYYTDSADLTTLKTYNDNKGYHGFDKLDDATLAVVHELITYAEDVTLPMTQNLDFFVPNSSRYQALIGTQYHPNELIDVISMEDKQAPIIPITHKLTISKTVTGTIADKKKEFNFEIHLKSSDGQAISGTYPTNSGELTVTDGKATFTLKDGESLIVEGLPSGYSYEITETGASDYEVSVNGKNAPDGKATKASVKEDETVAFENRKDLVPPTGLTTD</sequence>
<organism>
    <name type="scientific">Streptococcus pyogenes</name>
    <dbReference type="NCBI Taxonomy" id="1314"/>
    <lineage>
        <taxon>Bacteria</taxon>
        <taxon>Bacillati</taxon>
        <taxon>Bacillota</taxon>
        <taxon>Bacilli</taxon>
        <taxon>Lactobacillales</taxon>
        <taxon>Streptococcaceae</taxon>
        <taxon>Streptococcus</taxon>
    </lineage>
</organism>